<organism>
    <name type="scientific">Mycobacterium bovis (strain ATCC BAA-935 / AF2122/97)</name>
    <dbReference type="NCBI Taxonomy" id="233413"/>
    <lineage>
        <taxon>Bacteria</taxon>
        <taxon>Bacillati</taxon>
        <taxon>Actinomycetota</taxon>
        <taxon>Actinomycetes</taxon>
        <taxon>Mycobacteriales</taxon>
        <taxon>Mycobacteriaceae</taxon>
        <taxon>Mycobacterium</taxon>
        <taxon>Mycobacterium tuberculosis complex</taxon>
    </lineage>
</organism>
<proteinExistence type="inferred from homology"/>
<name>DNLJ_MYCBO</name>
<protein>
    <recommendedName>
        <fullName evidence="1">DNA ligase</fullName>
        <ecNumber evidence="1">6.5.1.2</ecNumber>
    </recommendedName>
    <alternativeName>
        <fullName evidence="1">Polydeoxyribonucleotide synthase [NAD(+)]</fullName>
    </alternativeName>
</protein>
<keyword id="KW-0227">DNA damage</keyword>
<keyword id="KW-0234">DNA repair</keyword>
<keyword id="KW-0235">DNA replication</keyword>
<keyword id="KW-0436">Ligase</keyword>
<keyword id="KW-0460">Magnesium</keyword>
<keyword id="KW-0464">Manganese</keyword>
<keyword id="KW-0479">Metal-binding</keyword>
<keyword id="KW-0520">NAD</keyword>
<keyword id="KW-1185">Reference proteome</keyword>
<keyword id="KW-0862">Zinc</keyword>
<accession>P63974</accession>
<accession>A0A1R3Y2W0</accession>
<accession>O53261</accession>
<accession>X2BM51</accession>
<dbReference type="EC" id="6.5.1.2" evidence="1"/>
<dbReference type="EMBL" id="LT708304">
    <property type="protein sequence ID" value="SIU01663.1"/>
    <property type="molecule type" value="Genomic_DNA"/>
</dbReference>
<dbReference type="RefSeq" id="NP_856684.1">
    <property type="nucleotide sequence ID" value="NC_002945.3"/>
</dbReference>
<dbReference type="RefSeq" id="WP_003415263.1">
    <property type="nucleotide sequence ID" value="NC_002945.4"/>
</dbReference>
<dbReference type="SMR" id="P63974"/>
<dbReference type="KEGG" id="mbo:BQ2027_MB3039C"/>
<dbReference type="PATRIC" id="fig|233413.5.peg.3339"/>
<dbReference type="Proteomes" id="UP000001419">
    <property type="component" value="Chromosome"/>
</dbReference>
<dbReference type="GO" id="GO:0005829">
    <property type="term" value="C:cytosol"/>
    <property type="evidence" value="ECO:0007669"/>
    <property type="project" value="TreeGrafter"/>
</dbReference>
<dbReference type="GO" id="GO:0003911">
    <property type="term" value="F:DNA ligase (NAD+) activity"/>
    <property type="evidence" value="ECO:0007669"/>
    <property type="project" value="UniProtKB-UniRule"/>
</dbReference>
<dbReference type="GO" id="GO:0046872">
    <property type="term" value="F:metal ion binding"/>
    <property type="evidence" value="ECO:0007669"/>
    <property type="project" value="UniProtKB-KW"/>
</dbReference>
<dbReference type="GO" id="GO:0006281">
    <property type="term" value="P:DNA repair"/>
    <property type="evidence" value="ECO:0007669"/>
    <property type="project" value="UniProtKB-KW"/>
</dbReference>
<dbReference type="GO" id="GO:0006260">
    <property type="term" value="P:DNA replication"/>
    <property type="evidence" value="ECO:0007669"/>
    <property type="project" value="UniProtKB-KW"/>
</dbReference>
<dbReference type="CDD" id="cd17748">
    <property type="entry name" value="BRCT_DNA_ligase_like"/>
    <property type="match status" value="1"/>
</dbReference>
<dbReference type="CDD" id="cd00114">
    <property type="entry name" value="LIGANc"/>
    <property type="match status" value="1"/>
</dbReference>
<dbReference type="FunFam" id="1.10.150.20:FF:000006">
    <property type="entry name" value="DNA ligase"/>
    <property type="match status" value="1"/>
</dbReference>
<dbReference type="FunFam" id="1.10.150.20:FF:000100">
    <property type="entry name" value="DNA ligase"/>
    <property type="match status" value="1"/>
</dbReference>
<dbReference type="FunFam" id="1.10.287.610:FF:000002">
    <property type="entry name" value="DNA ligase"/>
    <property type="match status" value="1"/>
</dbReference>
<dbReference type="FunFam" id="2.40.50.140:FF:000012">
    <property type="entry name" value="DNA ligase"/>
    <property type="match status" value="1"/>
</dbReference>
<dbReference type="FunFam" id="3.30.470.30:FF:000001">
    <property type="entry name" value="DNA ligase"/>
    <property type="match status" value="1"/>
</dbReference>
<dbReference type="FunFam" id="3.40.50.10190:FF:000054">
    <property type="entry name" value="DNA ligase"/>
    <property type="match status" value="1"/>
</dbReference>
<dbReference type="Gene3D" id="6.20.10.30">
    <property type="match status" value="1"/>
</dbReference>
<dbReference type="Gene3D" id="1.10.150.20">
    <property type="entry name" value="5' to 3' exonuclease, C-terminal subdomain"/>
    <property type="match status" value="2"/>
</dbReference>
<dbReference type="Gene3D" id="3.40.50.10190">
    <property type="entry name" value="BRCT domain"/>
    <property type="match status" value="1"/>
</dbReference>
<dbReference type="Gene3D" id="3.30.470.30">
    <property type="entry name" value="DNA ligase/mRNA capping enzyme"/>
    <property type="match status" value="1"/>
</dbReference>
<dbReference type="Gene3D" id="1.10.287.610">
    <property type="entry name" value="Helix hairpin bin"/>
    <property type="match status" value="1"/>
</dbReference>
<dbReference type="Gene3D" id="2.40.50.140">
    <property type="entry name" value="Nucleic acid-binding proteins"/>
    <property type="match status" value="1"/>
</dbReference>
<dbReference type="HAMAP" id="MF_01588">
    <property type="entry name" value="DNA_ligase_A"/>
    <property type="match status" value="1"/>
</dbReference>
<dbReference type="InterPro" id="IPR001357">
    <property type="entry name" value="BRCT_dom"/>
</dbReference>
<dbReference type="InterPro" id="IPR036420">
    <property type="entry name" value="BRCT_dom_sf"/>
</dbReference>
<dbReference type="InterPro" id="IPR041663">
    <property type="entry name" value="DisA/LigA_HHH"/>
</dbReference>
<dbReference type="InterPro" id="IPR001679">
    <property type="entry name" value="DNA_ligase"/>
</dbReference>
<dbReference type="InterPro" id="IPR018239">
    <property type="entry name" value="DNA_ligase_AS"/>
</dbReference>
<dbReference type="InterPro" id="IPR033136">
    <property type="entry name" value="DNA_ligase_CS"/>
</dbReference>
<dbReference type="InterPro" id="IPR013839">
    <property type="entry name" value="DNAligase_adenylation"/>
</dbReference>
<dbReference type="InterPro" id="IPR013840">
    <property type="entry name" value="DNAligase_N"/>
</dbReference>
<dbReference type="InterPro" id="IPR012340">
    <property type="entry name" value="NA-bd_OB-fold"/>
</dbReference>
<dbReference type="InterPro" id="IPR004150">
    <property type="entry name" value="NAD_DNA_ligase_OB"/>
</dbReference>
<dbReference type="InterPro" id="IPR010994">
    <property type="entry name" value="RuvA_2-like"/>
</dbReference>
<dbReference type="InterPro" id="IPR004149">
    <property type="entry name" value="Znf_DNAligase_C4"/>
</dbReference>
<dbReference type="NCBIfam" id="TIGR00575">
    <property type="entry name" value="dnlj"/>
    <property type="match status" value="1"/>
</dbReference>
<dbReference type="NCBIfam" id="NF005932">
    <property type="entry name" value="PRK07956.1"/>
    <property type="match status" value="1"/>
</dbReference>
<dbReference type="PANTHER" id="PTHR23389">
    <property type="entry name" value="CHROMOSOME TRANSMISSION FIDELITY FACTOR 18"/>
    <property type="match status" value="1"/>
</dbReference>
<dbReference type="PANTHER" id="PTHR23389:SF9">
    <property type="entry name" value="DNA LIGASE"/>
    <property type="match status" value="1"/>
</dbReference>
<dbReference type="Pfam" id="PF00533">
    <property type="entry name" value="BRCT"/>
    <property type="match status" value="1"/>
</dbReference>
<dbReference type="Pfam" id="PF01653">
    <property type="entry name" value="DNA_ligase_aden"/>
    <property type="match status" value="1"/>
</dbReference>
<dbReference type="Pfam" id="PF03120">
    <property type="entry name" value="DNA_ligase_OB"/>
    <property type="match status" value="1"/>
</dbReference>
<dbReference type="Pfam" id="PF03119">
    <property type="entry name" value="DNA_ligase_ZBD"/>
    <property type="match status" value="1"/>
</dbReference>
<dbReference type="Pfam" id="PF12826">
    <property type="entry name" value="HHH_2"/>
    <property type="match status" value="1"/>
</dbReference>
<dbReference type="Pfam" id="PF22745">
    <property type="entry name" value="Nlig-Ia"/>
    <property type="match status" value="1"/>
</dbReference>
<dbReference type="PIRSF" id="PIRSF001604">
    <property type="entry name" value="LigA"/>
    <property type="match status" value="1"/>
</dbReference>
<dbReference type="SMART" id="SM00292">
    <property type="entry name" value="BRCT"/>
    <property type="match status" value="1"/>
</dbReference>
<dbReference type="SMART" id="SM00532">
    <property type="entry name" value="LIGANc"/>
    <property type="match status" value="1"/>
</dbReference>
<dbReference type="SUPFAM" id="SSF52113">
    <property type="entry name" value="BRCT domain"/>
    <property type="match status" value="1"/>
</dbReference>
<dbReference type="SUPFAM" id="SSF56091">
    <property type="entry name" value="DNA ligase/mRNA capping enzyme, catalytic domain"/>
    <property type="match status" value="1"/>
</dbReference>
<dbReference type="SUPFAM" id="SSF50249">
    <property type="entry name" value="Nucleic acid-binding proteins"/>
    <property type="match status" value="1"/>
</dbReference>
<dbReference type="SUPFAM" id="SSF47781">
    <property type="entry name" value="RuvA domain 2-like"/>
    <property type="match status" value="1"/>
</dbReference>
<dbReference type="PROSITE" id="PS50172">
    <property type="entry name" value="BRCT"/>
    <property type="match status" value="1"/>
</dbReference>
<dbReference type="PROSITE" id="PS01055">
    <property type="entry name" value="DNA_LIGASE_N1"/>
    <property type="match status" value="1"/>
</dbReference>
<dbReference type="PROSITE" id="PS01056">
    <property type="entry name" value="DNA_LIGASE_N2"/>
    <property type="match status" value="1"/>
</dbReference>
<evidence type="ECO:0000255" key="1">
    <source>
        <dbReference type="HAMAP-Rule" id="MF_01588"/>
    </source>
</evidence>
<gene>
    <name evidence="1" type="primary">ligA</name>
    <name type="synonym">lig</name>
    <name type="ordered locus">BQ2027_MB3039C</name>
</gene>
<feature type="chain" id="PRO_0000161753" description="DNA ligase">
    <location>
        <begin position="1"/>
        <end position="691"/>
    </location>
</feature>
<feature type="domain" description="BRCT" evidence="1">
    <location>
        <begin position="607"/>
        <end position="691"/>
    </location>
</feature>
<feature type="active site" description="N6-AMP-lysine intermediate" evidence="1">
    <location>
        <position position="123"/>
    </location>
</feature>
<feature type="binding site" evidence="1">
    <location>
        <begin position="41"/>
        <end position="45"/>
    </location>
    <ligand>
        <name>NAD(+)</name>
        <dbReference type="ChEBI" id="CHEBI:57540"/>
    </ligand>
</feature>
<feature type="binding site" evidence="1">
    <location>
        <begin position="91"/>
        <end position="92"/>
    </location>
    <ligand>
        <name>NAD(+)</name>
        <dbReference type="ChEBI" id="CHEBI:57540"/>
    </ligand>
</feature>
<feature type="binding site" evidence="1">
    <location>
        <position position="121"/>
    </location>
    <ligand>
        <name>NAD(+)</name>
        <dbReference type="ChEBI" id="CHEBI:57540"/>
    </ligand>
</feature>
<feature type="binding site" evidence="1">
    <location>
        <position position="144"/>
    </location>
    <ligand>
        <name>NAD(+)</name>
        <dbReference type="ChEBI" id="CHEBI:57540"/>
    </ligand>
</feature>
<feature type="binding site" evidence="1">
    <location>
        <position position="184"/>
    </location>
    <ligand>
        <name>NAD(+)</name>
        <dbReference type="ChEBI" id="CHEBI:57540"/>
    </ligand>
</feature>
<feature type="binding site" evidence="1">
    <location>
        <position position="300"/>
    </location>
    <ligand>
        <name>NAD(+)</name>
        <dbReference type="ChEBI" id="CHEBI:57540"/>
    </ligand>
</feature>
<feature type="binding site" evidence="1">
    <location>
        <position position="324"/>
    </location>
    <ligand>
        <name>NAD(+)</name>
        <dbReference type="ChEBI" id="CHEBI:57540"/>
    </ligand>
</feature>
<feature type="binding site" evidence="1">
    <location>
        <position position="418"/>
    </location>
    <ligand>
        <name>Zn(2+)</name>
        <dbReference type="ChEBI" id="CHEBI:29105"/>
    </ligand>
</feature>
<feature type="binding site" evidence="1">
    <location>
        <position position="421"/>
    </location>
    <ligand>
        <name>Zn(2+)</name>
        <dbReference type="ChEBI" id="CHEBI:29105"/>
    </ligand>
</feature>
<feature type="binding site" evidence="1">
    <location>
        <position position="437"/>
    </location>
    <ligand>
        <name>Zn(2+)</name>
        <dbReference type="ChEBI" id="CHEBI:29105"/>
    </ligand>
</feature>
<feature type="binding site" evidence="1">
    <location>
        <position position="443"/>
    </location>
    <ligand>
        <name>Zn(2+)</name>
        <dbReference type="ChEBI" id="CHEBI:29105"/>
    </ligand>
</feature>
<comment type="function">
    <text evidence="1">DNA ligase that catalyzes the formation of phosphodiester linkages between 5'-phosphoryl and 3'-hydroxyl groups in double-stranded DNA using NAD as a coenzyme and as the energy source for the reaction. It is essential for DNA replication and repair of damaged DNA.</text>
</comment>
<comment type="catalytic activity">
    <reaction evidence="1">
        <text>NAD(+) + (deoxyribonucleotide)n-3'-hydroxyl + 5'-phospho-(deoxyribonucleotide)m = (deoxyribonucleotide)n+m + AMP + beta-nicotinamide D-nucleotide.</text>
        <dbReference type="EC" id="6.5.1.2"/>
    </reaction>
</comment>
<comment type="cofactor">
    <cofactor evidence="1">
        <name>Mg(2+)</name>
        <dbReference type="ChEBI" id="CHEBI:18420"/>
    </cofactor>
    <cofactor evidence="1">
        <name>Mn(2+)</name>
        <dbReference type="ChEBI" id="CHEBI:29035"/>
    </cofactor>
</comment>
<comment type="similarity">
    <text evidence="1">Belongs to the NAD-dependent DNA ligase family. LigA subfamily.</text>
</comment>
<sequence>MSSPDADQTAPEVLRQWQALAEEVREHQFRYYVRDAPIISDAEFDELLRRLEALEEQHPELRTPDSPTQLVGGAGFATDFEPVDHLERMLSLDNAFTADELAAWAGRIHAEVGDAAHYLCELKIDGVALSLVYREGRLTRASTRGDGRTGEDVTLNARTIADVPERLTPGDDYPVPEVLEVRGEVFFRLDDFQALNASLVEEGKAPFANPRNSAAGSLRQKDPAVTARRRLRMICHGLGHVEGFRPATLHQAYLALRAWGLPVSEHTTLATDLAGVRERIDYWGEHRHEVDHEIDGVVVKVDEVALQRRLGSTSRAPRWAIAYKYPPEEAQTKLLDIRVNVGRTGRITPFAFMTPVKVAGSTVGQATLHNASEIKRKGVLIGDTVVIRKAGDVIPEVLGPVVELRDGSEREFIMPTTCPECGSPLAPEKEGDADIRCPNARGCPGQLRERVFHVASRNGLDIEVLGYEAGVALLQAKVIADEGELFALTERDLLRTDLFRTKAGELSANGKRLLVNLDKAKAAPLWRVLVALSIRHVGPTAARALATEFGSLDAIAAASTDQLAAVEGVGPTIAAAVTEWFAVDWHREIVDKWRAAGVRMVDERDESVPRTLAGLTIVVTGSLTGFSRDDAKEAIVARGGKAAGSVSKKTNYVVAGDSPGSKYDKAVELGVPILDEDGFRRLLADGPASRT</sequence>
<reference key="1">
    <citation type="journal article" date="2003" name="Proc. Natl. Acad. Sci. U.S.A.">
        <title>The complete genome sequence of Mycobacterium bovis.</title>
        <authorList>
            <person name="Garnier T."/>
            <person name="Eiglmeier K."/>
            <person name="Camus J.-C."/>
            <person name="Medina N."/>
            <person name="Mansoor H."/>
            <person name="Pryor M."/>
            <person name="Duthoy S."/>
            <person name="Grondin S."/>
            <person name="Lacroix C."/>
            <person name="Monsempe C."/>
            <person name="Simon S."/>
            <person name="Harris B."/>
            <person name="Atkin R."/>
            <person name="Doggett J."/>
            <person name="Mayes R."/>
            <person name="Keating L."/>
            <person name="Wheeler P.R."/>
            <person name="Parkhill J."/>
            <person name="Barrell B.G."/>
            <person name="Cole S.T."/>
            <person name="Gordon S.V."/>
            <person name="Hewinson R.G."/>
        </authorList>
    </citation>
    <scope>NUCLEOTIDE SEQUENCE [LARGE SCALE GENOMIC DNA]</scope>
    <source>
        <strain>ATCC BAA-935 / AF2122/97</strain>
    </source>
</reference>
<reference key="2">
    <citation type="journal article" date="2017" name="Genome Announc.">
        <title>Updated reference genome sequence and annotation of Mycobacterium bovis AF2122/97.</title>
        <authorList>
            <person name="Malone K.M."/>
            <person name="Farrell D."/>
            <person name="Stuber T.P."/>
            <person name="Schubert O.T."/>
            <person name="Aebersold R."/>
            <person name="Robbe-Austerman S."/>
            <person name="Gordon S.V."/>
        </authorList>
    </citation>
    <scope>NUCLEOTIDE SEQUENCE [LARGE SCALE GENOMIC DNA]</scope>
    <scope>GENOME REANNOTATION</scope>
    <source>
        <strain>ATCC BAA-935 / AF2122/97</strain>
    </source>
</reference>